<accession>C0HLR1</accession>
<protein>
    <recommendedName>
        <fullName evidence="3">Large ribosomal subunit protein bL12c</fullName>
    </recommendedName>
    <alternativeName>
        <fullName evidence="3">50S ribosomal protein L12, chloroplastic</fullName>
    </alternativeName>
</protein>
<reference evidence="3" key="1">
    <citation type="journal article" date="2020" name="J. Exp. Mar. Biol. Ecol.">
        <title>Diurnal variations in expression of photosynthesis-related proteins in the harmful Raphidophyceae Chattonella marina var. antiqua.</title>
        <authorList>
            <person name="Qiu X."/>
            <person name="Mukai K."/>
            <person name="Shimasaki Y."/>
            <person name="Wu M."/>
            <person name="Chen C."/>
            <person name="Lu Y."/>
            <person name="Ichinose H."/>
            <person name="Nakashima T."/>
            <person name="Kato-Unoki Y."/>
            <person name="Oshima Y."/>
        </authorList>
    </citation>
    <scope>PROTEIN SEQUENCE</scope>
    <scope>INDUCTION</scope>
    <source>
        <strain evidence="2">NIES-1</strain>
    </source>
</reference>
<dbReference type="GO" id="GO:0009507">
    <property type="term" value="C:chloroplast"/>
    <property type="evidence" value="ECO:0007669"/>
    <property type="project" value="UniProtKB-SubCell"/>
</dbReference>
<dbReference type="GO" id="GO:1990904">
    <property type="term" value="C:ribonucleoprotein complex"/>
    <property type="evidence" value="ECO:0007669"/>
    <property type="project" value="UniProtKB-KW"/>
</dbReference>
<dbReference type="GO" id="GO:0005840">
    <property type="term" value="C:ribosome"/>
    <property type="evidence" value="ECO:0007669"/>
    <property type="project" value="UniProtKB-KW"/>
</dbReference>
<evidence type="ECO:0000269" key="1">
    <source ref="1"/>
</evidence>
<evidence type="ECO:0000303" key="2">
    <source ref="1"/>
</evidence>
<evidence type="ECO:0000305" key="3"/>
<sequence length="15" mass="1702">SKVENIVDELKTLTL</sequence>
<proteinExistence type="evidence at protein level"/>
<organism evidence="2">
    <name type="scientific">Chattonella marina var. antiqua</name>
    <name type="common">Red tide flagellate</name>
    <name type="synonym">Chattonella antiqua</name>
    <dbReference type="NCBI Taxonomy" id="859642"/>
    <lineage>
        <taxon>Eukaryota</taxon>
        <taxon>Sar</taxon>
        <taxon>Stramenopiles</taxon>
        <taxon>Ochrophyta</taxon>
        <taxon>Raphidophyceae</taxon>
        <taxon>Chattonellales</taxon>
        <taxon>Chattonellaceae</taxon>
        <taxon>Chattonella</taxon>
    </lineage>
</organism>
<name>RK12_CHAMQ</name>
<feature type="chain" id="PRO_0000450204" description="Large ribosomal subunit protein bL12c">
    <location>
        <begin position="1" status="less than"/>
        <end position="15" status="greater than"/>
    </location>
</feature>
<feature type="non-terminal residue" evidence="3">
    <location>
        <position position="1"/>
    </location>
</feature>
<feature type="non-terminal residue" evidence="3">
    <location>
        <position position="15"/>
    </location>
</feature>
<comment type="function">
    <text evidence="3">Forms part of the ribosomal stalk which helps the ribosome interact with GTP-bound translation factors. Is thus essential for accurate translation.</text>
</comment>
<comment type="subunit">
    <text evidence="3">Homodimer. Part of the ribosomal stalk of the 50S ribosomal subunit. Forms a multimeric L10(L12)X complex, where L10 forms an elongated spine to which 2 to 4 L12 dimers bind in a sequential fashion. Binds GTP-bound translation factors.</text>
</comment>
<comment type="subcellular location">
    <subcellularLocation>
        <location>Plastid</location>
    </subcellularLocation>
    <subcellularLocation>
        <location evidence="3">Plastid</location>
        <location evidence="3">Chloroplast</location>
    </subcellularLocation>
</comment>
<comment type="induction">
    <text evidence="1">Expression shows a diurnal pattern of oscillation across the 24-hour light-dark, with increased levels during the dark period (at protein level).</text>
</comment>
<comment type="similarity">
    <text evidence="3">Belongs to the bacterial ribosomal protein bL12 family.</text>
</comment>
<keyword id="KW-0150">Chloroplast</keyword>
<keyword id="KW-0903">Direct protein sequencing</keyword>
<keyword id="KW-0934">Plastid</keyword>
<keyword id="KW-0687">Ribonucleoprotein</keyword>
<keyword id="KW-0689">Ribosomal protein</keyword>